<gene>
    <name type="primary">NCS1</name>
    <name type="synonym">FLUP</name>
    <name type="synonym">FREQ</name>
</gene>
<dbReference type="EMBL" id="L27420">
    <property type="protein sequence ID" value="AAA85633.1"/>
    <property type="molecule type" value="mRNA"/>
</dbReference>
<dbReference type="RefSeq" id="NP_990708.1">
    <property type="nucleotide sequence ID" value="NM_205377.2"/>
</dbReference>
<dbReference type="RefSeq" id="XP_015134825.1">
    <property type="nucleotide sequence ID" value="XM_015279339.1"/>
</dbReference>
<dbReference type="BMRB" id="P62167"/>
<dbReference type="SMR" id="P62167"/>
<dbReference type="FunCoup" id="P62167">
    <property type="interactions" value="240"/>
</dbReference>
<dbReference type="PaxDb" id="9031-ENSGALP00000020720"/>
<dbReference type="Ensembl" id="ENSGALT00010069148.1">
    <property type="protein sequence ID" value="ENSGALP00010042590.1"/>
    <property type="gene ID" value="ENSGALG00010028551.1"/>
</dbReference>
<dbReference type="GeneID" id="396336"/>
<dbReference type="KEGG" id="gga:396336"/>
<dbReference type="CTD" id="23413"/>
<dbReference type="VEuPathDB" id="HostDB:geneid_396336"/>
<dbReference type="eggNOG" id="KOG0044">
    <property type="taxonomic scope" value="Eukaryota"/>
</dbReference>
<dbReference type="GeneTree" id="ENSGT00940000163010"/>
<dbReference type="HOGENOM" id="CLU_072366_1_2_1"/>
<dbReference type="InParanoid" id="P62167"/>
<dbReference type="OMA" id="EYVFNVF"/>
<dbReference type="OrthoDB" id="191686at2759"/>
<dbReference type="PhylomeDB" id="P62167"/>
<dbReference type="PRO" id="PR:P62167"/>
<dbReference type="Proteomes" id="UP000000539">
    <property type="component" value="Chromosome 17"/>
</dbReference>
<dbReference type="Bgee" id="ENSGALG00000012710">
    <property type="expression patterns" value="Expressed in brain and 10 other cell types or tissues"/>
</dbReference>
<dbReference type="GO" id="GO:0005794">
    <property type="term" value="C:Golgi apparatus"/>
    <property type="evidence" value="ECO:0007669"/>
    <property type="project" value="UniProtKB-SubCell"/>
</dbReference>
<dbReference type="GO" id="GO:0048471">
    <property type="term" value="C:perinuclear region of cytoplasm"/>
    <property type="evidence" value="ECO:0007669"/>
    <property type="project" value="UniProtKB-SubCell"/>
</dbReference>
<dbReference type="GO" id="GO:0005886">
    <property type="term" value="C:plasma membrane"/>
    <property type="evidence" value="ECO:0007669"/>
    <property type="project" value="UniProtKB-SubCell"/>
</dbReference>
<dbReference type="GO" id="GO:0014069">
    <property type="term" value="C:postsynaptic density"/>
    <property type="evidence" value="ECO:0007669"/>
    <property type="project" value="UniProtKB-SubCell"/>
</dbReference>
<dbReference type="GO" id="GO:0005509">
    <property type="term" value="F:calcium ion binding"/>
    <property type="evidence" value="ECO:0000318"/>
    <property type="project" value="GO_Central"/>
</dbReference>
<dbReference type="GO" id="GO:0008048">
    <property type="term" value="F:calcium sensitive guanylate cyclase activator activity"/>
    <property type="evidence" value="ECO:0000318"/>
    <property type="project" value="GO_Central"/>
</dbReference>
<dbReference type="GO" id="GO:0005245">
    <property type="term" value="F:voltage-gated calcium channel activity"/>
    <property type="evidence" value="ECO:0000250"/>
    <property type="project" value="UniProtKB"/>
</dbReference>
<dbReference type="GO" id="GO:0010975">
    <property type="term" value="P:regulation of neuron projection development"/>
    <property type="evidence" value="ECO:0000250"/>
    <property type="project" value="UniProtKB"/>
</dbReference>
<dbReference type="GO" id="GO:0009966">
    <property type="term" value="P:regulation of signal transduction"/>
    <property type="evidence" value="ECO:0000318"/>
    <property type="project" value="GO_Central"/>
</dbReference>
<dbReference type="CDD" id="cd00051">
    <property type="entry name" value="EFh"/>
    <property type="match status" value="2"/>
</dbReference>
<dbReference type="FunFam" id="1.10.238.10:FF:000009">
    <property type="entry name" value="Visinin-like protein 1"/>
    <property type="match status" value="1"/>
</dbReference>
<dbReference type="Gene3D" id="1.10.238.10">
    <property type="entry name" value="EF-hand"/>
    <property type="match status" value="1"/>
</dbReference>
<dbReference type="InterPro" id="IPR011992">
    <property type="entry name" value="EF-hand-dom_pair"/>
</dbReference>
<dbReference type="InterPro" id="IPR018247">
    <property type="entry name" value="EF_Hand_1_Ca_BS"/>
</dbReference>
<dbReference type="InterPro" id="IPR002048">
    <property type="entry name" value="EF_hand_dom"/>
</dbReference>
<dbReference type="InterPro" id="IPR028846">
    <property type="entry name" value="Recoverin"/>
</dbReference>
<dbReference type="PANTHER" id="PTHR23055">
    <property type="entry name" value="CALCIUM BINDING PROTEINS"/>
    <property type="match status" value="1"/>
</dbReference>
<dbReference type="PANTHER" id="PTHR23055:SF198">
    <property type="entry name" value="NEURONAL CALCIUM SENSOR 1"/>
    <property type="match status" value="1"/>
</dbReference>
<dbReference type="Pfam" id="PF00036">
    <property type="entry name" value="EF-hand_1"/>
    <property type="match status" value="1"/>
</dbReference>
<dbReference type="Pfam" id="PF13499">
    <property type="entry name" value="EF-hand_7"/>
    <property type="match status" value="1"/>
</dbReference>
<dbReference type="PRINTS" id="PR00450">
    <property type="entry name" value="RECOVERIN"/>
</dbReference>
<dbReference type="SMART" id="SM00054">
    <property type="entry name" value="EFh"/>
    <property type="match status" value="3"/>
</dbReference>
<dbReference type="SUPFAM" id="SSF47473">
    <property type="entry name" value="EF-hand"/>
    <property type="match status" value="1"/>
</dbReference>
<dbReference type="PROSITE" id="PS00018">
    <property type="entry name" value="EF_HAND_1"/>
    <property type="match status" value="3"/>
</dbReference>
<dbReference type="PROSITE" id="PS50222">
    <property type="entry name" value="EF_HAND_2"/>
    <property type="match status" value="3"/>
</dbReference>
<sequence length="190" mass="21879">MGKSNSKLKPEVVEELTRKTYFTEKEVQQWYKGFIKDCPSGQLDAAGFQKIYKQFFPFGDPTKFATFVFNVFDENKDGRIEFSEFIQALSVTSRGTLDEKLRWAFKLYDLDNDGYITRNEMLDIVDAIYQMVGNTVELPEEENTPEKRVDRIFAMMDKNADGKLTLQEFQEGSKADPSIVQALSLYDGLV</sequence>
<accession>P62167</accession>
<accession>P36610</accession>
<accession>Q9UK26</accession>
<proteinExistence type="evidence at protein level"/>
<reference key="1">
    <citation type="journal article" date="1995" name="Biochem. Biophys. Res. Commun.">
        <title>Regulation of rhodopsin phosphorylation by a family of neuronal calcium sensors.</title>
        <authorList>
            <person name="de Castro E."/>
            <person name="Nef S."/>
            <person name="Fiumelli H."/>
            <person name="Lenz S.E."/>
            <person name="Kawamura S."/>
            <person name="Nef P."/>
        </authorList>
    </citation>
    <scope>NUCLEOTIDE SEQUENCE [MRNA]</scope>
</reference>
<reference key="2">
    <citation type="journal article" date="1995" name="J. Recept. Signal Transduct.">
        <title>Identification of neuronal calcium sensor (NCS-1) possibly involved in the regulation of receptor phosphorylation.</title>
        <authorList>
            <person name="Nef S."/>
            <person name="Fiumelli H."/>
            <person name="de Castro E."/>
            <person name="Raes M.-B."/>
            <person name="Nef P."/>
        </authorList>
    </citation>
    <scope>CHARACTERIZATION</scope>
    <source>
        <tissue>Brain</tissue>
    </source>
</reference>
<organism>
    <name type="scientific">Gallus gallus</name>
    <name type="common">Chicken</name>
    <dbReference type="NCBI Taxonomy" id="9031"/>
    <lineage>
        <taxon>Eukaryota</taxon>
        <taxon>Metazoa</taxon>
        <taxon>Chordata</taxon>
        <taxon>Craniata</taxon>
        <taxon>Vertebrata</taxon>
        <taxon>Euteleostomi</taxon>
        <taxon>Archelosauria</taxon>
        <taxon>Archosauria</taxon>
        <taxon>Dinosauria</taxon>
        <taxon>Saurischia</taxon>
        <taxon>Theropoda</taxon>
        <taxon>Coelurosauria</taxon>
        <taxon>Aves</taxon>
        <taxon>Neognathae</taxon>
        <taxon>Galloanserae</taxon>
        <taxon>Galliformes</taxon>
        <taxon>Phasianidae</taxon>
        <taxon>Phasianinae</taxon>
        <taxon>Gallus</taxon>
    </lineage>
</organism>
<evidence type="ECO:0000250" key="1"/>
<evidence type="ECO:0000250" key="2">
    <source>
        <dbReference type="UniProtKB" id="P62166"/>
    </source>
</evidence>
<evidence type="ECO:0000250" key="3">
    <source>
        <dbReference type="UniProtKB" id="P62168"/>
    </source>
</evidence>
<evidence type="ECO:0000255" key="4">
    <source>
        <dbReference type="PROSITE-ProRule" id="PRU00448"/>
    </source>
</evidence>
<evidence type="ECO:0000305" key="5"/>
<protein>
    <recommendedName>
        <fullName>Neuronal calcium sensor 1</fullName>
        <shortName>NCS-1</shortName>
    </recommendedName>
    <alternativeName>
        <fullName>Frequenin homolog</fullName>
    </alternativeName>
    <alternativeName>
        <fullName>Frequenin-like protein</fullName>
    </alternativeName>
    <alternativeName>
        <fullName>Frequenin-like ubiquitous protein</fullName>
    </alternativeName>
</protein>
<feature type="initiator methionine" description="Removed" evidence="1">
    <location>
        <position position="1"/>
    </location>
</feature>
<feature type="chain" id="PRO_0000073791" description="Neuronal calcium sensor 1">
    <location>
        <begin position="2"/>
        <end position="190"/>
    </location>
</feature>
<feature type="domain" description="EF-hand 1" evidence="5">
    <location>
        <begin position="24"/>
        <end position="59"/>
    </location>
</feature>
<feature type="domain" description="EF-hand 2" evidence="4">
    <location>
        <begin position="60"/>
        <end position="95"/>
    </location>
</feature>
<feature type="domain" description="EF-hand 3" evidence="4">
    <location>
        <begin position="96"/>
        <end position="131"/>
    </location>
</feature>
<feature type="domain" description="EF-hand 4" evidence="4">
    <location>
        <begin position="144"/>
        <end position="179"/>
    </location>
</feature>
<feature type="region of interest" description="Ancestral calcium site 1">
    <location>
        <begin position="36"/>
        <end position="47"/>
    </location>
</feature>
<feature type="binding site" evidence="4">
    <location>
        <position position="73"/>
    </location>
    <ligand>
        <name>Ca(2+)</name>
        <dbReference type="ChEBI" id="CHEBI:29108"/>
        <label>1</label>
    </ligand>
</feature>
<feature type="binding site" evidence="4">
    <location>
        <position position="75"/>
    </location>
    <ligand>
        <name>Ca(2+)</name>
        <dbReference type="ChEBI" id="CHEBI:29108"/>
        <label>1</label>
    </ligand>
</feature>
<feature type="binding site" evidence="4">
    <location>
        <position position="77"/>
    </location>
    <ligand>
        <name>Ca(2+)</name>
        <dbReference type="ChEBI" id="CHEBI:29108"/>
        <label>1</label>
    </ligand>
</feature>
<feature type="binding site" evidence="4">
    <location>
        <position position="79"/>
    </location>
    <ligand>
        <name>Ca(2+)</name>
        <dbReference type="ChEBI" id="CHEBI:29108"/>
        <label>1</label>
    </ligand>
</feature>
<feature type="binding site" evidence="4">
    <location>
        <position position="84"/>
    </location>
    <ligand>
        <name>Ca(2+)</name>
        <dbReference type="ChEBI" id="CHEBI:29108"/>
        <label>1</label>
    </ligand>
</feature>
<feature type="binding site" evidence="4">
    <location>
        <position position="109"/>
    </location>
    <ligand>
        <name>Ca(2+)</name>
        <dbReference type="ChEBI" id="CHEBI:29108"/>
        <label>2</label>
    </ligand>
</feature>
<feature type="binding site" evidence="4">
    <location>
        <position position="111"/>
    </location>
    <ligand>
        <name>Ca(2+)</name>
        <dbReference type="ChEBI" id="CHEBI:29108"/>
        <label>2</label>
    </ligand>
</feature>
<feature type="binding site" evidence="4">
    <location>
        <position position="113"/>
    </location>
    <ligand>
        <name>Ca(2+)</name>
        <dbReference type="ChEBI" id="CHEBI:29108"/>
        <label>2</label>
    </ligand>
</feature>
<feature type="binding site" evidence="4">
    <location>
        <position position="115"/>
    </location>
    <ligand>
        <name>Ca(2+)</name>
        <dbReference type="ChEBI" id="CHEBI:29108"/>
        <label>2</label>
    </ligand>
</feature>
<feature type="binding site" evidence="4">
    <location>
        <position position="120"/>
    </location>
    <ligand>
        <name>Ca(2+)</name>
        <dbReference type="ChEBI" id="CHEBI:29108"/>
        <label>2</label>
    </ligand>
</feature>
<feature type="binding site" evidence="4">
    <location>
        <position position="157"/>
    </location>
    <ligand>
        <name>Ca(2+)</name>
        <dbReference type="ChEBI" id="CHEBI:29108"/>
        <label>3</label>
    </ligand>
</feature>
<feature type="binding site" evidence="4">
    <location>
        <position position="159"/>
    </location>
    <ligand>
        <name>Ca(2+)</name>
        <dbReference type="ChEBI" id="CHEBI:29108"/>
        <label>3</label>
    </ligand>
</feature>
<feature type="binding site" evidence="4">
    <location>
        <position position="161"/>
    </location>
    <ligand>
        <name>Ca(2+)</name>
        <dbReference type="ChEBI" id="CHEBI:29108"/>
        <label>3</label>
    </ligand>
</feature>
<feature type="binding site" evidence="4">
    <location>
        <position position="163"/>
    </location>
    <ligand>
        <name>Ca(2+)</name>
        <dbReference type="ChEBI" id="CHEBI:29108"/>
        <label>3</label>
    </ligand>
</feature>
<feature type="binding site" evidence="4">
    <location>
        <position position="168"/>
    </location>
    <ligand>
        <name>Ca(2+)</name>
        <dbReference type="ChEBI" id="CHEBI:29108"/>
        <label>3</label>
    </ligand>
</feature>
<feature type="lipid moiety-binding region" description="N-myristoyl glycine" evidence="1">
    <location>
        <position position="2"/>
    </location>
</feature>
<name>NCS1_CHICK</name>
<comment type="function">
    <text>Neuronal calcium sensor, regulator of G protein-coupled receptor phosphorylation in a calcium dependent manner. Directly regulates GRK1 (RHOK), but not GRK2 to GRK5. Can substitute for calmodulin.</text>
</comment>
<comment type="subunit">
    <text evidence="1">Interacts with KCND2.</text>
</comment>
<comment type="subcellular location">
    <subcellularLocation>
        <location evidence="2">Golgi apparatus</location>
    </subcellularLocation>
    <subcellularLocation>
        <location evidence="2">Postsynaptic density</location>
    </subcellularLocation>
    <subcellularLocation>
        <location evidence="2">Cytoplasm</location>
        <location evidence="2">Perinuclear region</location>
    </subcellularLocation>
    <subcellularLocation>
        <location evidence="3">Cytoplasm</location>
    </subcellularLocation>
    <subcellularLocation>
        <location evidence="2">Cell membrane</location>
        <topology evidence="2">Peripheral membrane protein</topology>
    </subcellularLocation>
    <subcellularLocation>
        <location evidence="3">Membrane</location>
        <topology evidence="2">Lipid-anchor</topology>
    </subcellularLocation>
    <text evidence="2">Associated with Golgi stacks. Post-synaptic densities of dendrites, and in the pre-synaptic nerve terminal at neuromuscular junctions.</text>
</comment>
<comment type="tissue specificity">
    <text>Post-mitotic neurons in the central and peripheral nervous system.</text>
</comment>
<comment type="developmental stage">
    <text>Found in embryos from 3 dpc to adult stages.</text>
</comment>
<comment type="miscellaneous">
    <text evidence="1">Binds 3 calcium ions via the second, third and fourth EF-hand.</text>
</comment>
<comment type="similarity">
    <text evidence="5">Belongs to the recoverin family.</text>
</comment>
<keyword id="KW-0106">Calcium</keyword>
<keyword id="KW-1003">Cell membrane</keyword>
<keyword id="KW-0963">Cytoplasm</keyword>
<keyword id="KW-0333">Golgi apparatus</keyword>
<keyword id="KW-0449">Lipoprotein</keyword>
<keyword id="KW-0472">Membrane</keyword>
<keyword id="KW-0479">Metal-binding</keyword>
<keyword id="KW-0519">Myristate</keyword>
<keyword id="KW-1185">Reference proteome</keyword>
<keyword id="KW-0677">Repeat</keyword>
<keyword id="KW-0770">Synapse</keyword>